<evidence type="ECO:0000255" key="1">
    <source>
        <dbReference type="HAMAP-Rule" id="MF_00049"/>
    </source>
</evidence>
<protein>
    <recommendedName>
        <fullName evidence="1">Leucine--tRNA ligase</fullName>
        <ecNumber evidence="1">6.1.1.4</ecNumber>
    </recommendedName>
    <alternativeName>
        <fullName evidence="1">Leucyl-tRNA synthetase</fullName>
        <shortName evidence="1">LeuRS</shortName>
    </alternativeName>
</protein>
<gene>
    <name evidence="1" type="primary">leuS</name>
    <name type="ordered locus">LBUL_1451</name>
</gene>
<sequence>MYNHKVVEKKWQKYWLENKTFKTGTDPEKPKYYVLDMFPYPSGKGLHVGHPEGYTATDIMARMKRAQGYNVLHPMGWDAFGLPAEQYALQTGNDPATFTDENIAHFKKQLQALGFSYDWDREIKTTDPNYYKWTQWIFEQMYKMGLAYEAEVPVNWSPDLGTVVANEEVIDGKTERGGYPVYRRKMRQWMLKITAYADRLLDDLDDLDWPEPIKEMQRNWIGRSVGAQVTFKIKDSDKSFAVFTTRPDTLFGCSYTVLAPENELVKEITSPEQKEAVDAYIKSIESKSDLERTDLNKDKTGVFTGAYAINPVNGEEVPVWISDYVLATYGTGAVIAVPAHDERDYAFATKFDLPIKEVVEGGDISKEAFAGDGVHVNSDFLNGLHNEEAKAKMVDWLTEKGVGEKKVNYKMRDWNFSRQRYWGEPIPVIHWEDGETTLVPEDELPLRLPKESNIKPSGTPESPLANLTDWVNVVDENGRKGKRETNTMPQWAGSSWYFLRYIDPHNDKALADPELLKKWMPVDLYIGGAEHATLHLLYARFWHKVLYDLGVVPTKEPFQKLYNQGLILKNHEKMSKSRGNVVNPDDVVDEYGADSLRTYEMFMGPLNASIDWDDNGPSGVKKFLDRVWRTFVNDLDLDPIPSEKITDKNDGKLDKIYNETVKTVTEHFEELRFNTAISQMMVFMNACQKVDKIPREYAEGFVKLMAPVAPHMMEEIWHVFGHDESVQFAAWPTYDASKLVESTVEMAVTVNGKKRGNFQIAKDASREEAQAAATALPHVKEFLEGKEIKKVIVVPNKIVNIVAK</sequence>
<comment type="catalytic activity">
    <reaction evidence="1">
        <text>tRNA(Leu) + L-leucine + ATP = L-leucyl-tRNA(Leu) + AMP + diphosphate</text>
        <dbReference type="Rhea" id="RHEA:11688"/>
        <dbReference type="Rhea" id="RHEA-COMP:9613"/>
        <dbReference type="Rhea" id="RHEA-COMP:9622"/>
        <dbReference type="ChEBI" id="CHEBI:30616"/>
        <dbReference type="ChEBI" id="CHEBI:33019"/>
        <dbReference type="ChEBI" id="CHEBI:57427"/>
        <dbReference type="ChEBI" id="CHEBI:78442"/>
        <dbReference type="ChEBI" id="CHEBI:78494"/>
        <dbReference type="ChEBI" id="CHEBI:456215"/>
        <dbReference type="EC" id="6.1.1.4"/>
    </reaction>
</comment>
<comment type="subcellular location">
    <subcellularLocation>
        <location evidence="1">Cytoplasm</location>
    </subcellularLocation>
</comment>
<comment type="similarity">
    <text evidence="1">Belongs to the class-I aminoacyl-tRNA synthetase family.</text>
</comment>
<proteinExistence type="inferred from homology"/>
<name>SYL_LACDB</name>
<organism>
    <name type="scientific">Lactobacillus delbrueckii subsp. bulgaricus (strain ATCC BAA-365 / Lb-18)</name>
    <dbReference type="NCBI Taxonomy" id="321956"/>
    <lineage>
        <taxon>Bacteria</taxon>
        <taxon>Bacillati</taxon>
        <taxon>Bacillota</taxon>
        <taxon>Bacilli</taxon>
        <taxon>Lactobacillales</taxon>
        <taxon>Lactobacillaceae</taxon>
        <taxon>Lactobacillus</taxon>
    </lineage>
</organism>
<keyword id="KW-0030">Aminoacyl-tRNA synthetase</keyword>
<keyword id="KW-0067">ATP-binding</keyword>
<keyword id="KW-0963">Cytoplasm</keyword>
<keyword id="KW-0436">Ligase</keyword>
<keyword id="KW-0547">Nucleotide-binding</keyword>
<keyword id="KW-0648">Protein biosynthesis</keyword>
<feature type="chain" id="PRO_0000334767" description="Leucine--tRNA ligase">
    <location>
        <begin position="1"/>
        <end position="804"/>
    </location>
</feature>
<feature type="short sequence motif" description="'HIGH' region">
    <location>
        <begin position="39"/>
        <end position="50"/>
    </location>
</feature>
<feature type="short sequence motif" description="'KMSKS' region">
    <location>
        <begin position="573"/>
        <end position="577"/>
    </location>
</feature>
<feature type="binding site" evidence="1">
    <location>
        <position position="576"/>
    </location>
    <ligand>
        <name>ATP</name>
        <dbReference type="ChEBI" id="CHEBI:30616"/>
    </ligand>
</feature>
<reference key="1">
    <citation type="journal article" date="2006" name="Proc. Natl. Acad. Sci. U.S.A.">
        <title>Comparative genomics of the lactic acid bacteria.</title>
        <authorList>
            <person name="Makarova K.S."/>
            <person name="Slesarev A."/>
            <person name="Wolf Y.I."/>
            <person name="Sorokin A."/>
            <person name="Mirkin B."/>
            <person name="Koonin E.V."/>
            <person name="Pavlov A."/>
            <person name="Pavlova N."/>
            <person name="Karamychev V."/>
            <person name="Polouchine N."/>
            <person name="Shakhova V."/>
            <person name="Grigoriev I."/>
            <person name="Lou Y."/>
            <person name="Rohksar D."/>
            <person name="Lucas S."/>
            <person name="Huang K."/>
            <person name="Goodstein D.M."/>
            <person name="Hawkins T."/>
            <person name="Plengvidhya V."/>
            <person name="Welker D."/>
            <person name="Hughes J."/>
            <person name="Goh Y."/>
            <person name="Benson A."/>
            <person name="Baldwin K."/>
            <person name="Lee J.-H."/>
            <person name="Diaz-Muniz I."/>
            <person name="Dosti B."/>
            <person name="Smeianov V."/>
            <person name="Wechter W."/>
            <person name="Barabote R."/>
            <person name="Lorca G."/>
            <person name="Altermann E."/>
            <person name="Barrangou R."/>
            <person name="Ganesan B."/>
            <person name="Xie Y."/>
            <person name="Rawsthorne H."/>
            <person name="Tamir D."/>
            <person name="Parker C."/>
            <person name="Breidt F."/>
            <person name="Broadbent J.R."/>
            <person name="Hutkins R."/>
            <person name="O'Sullivan D."/>
            <person name="Steele J."/>
            <person name="Unlu G."/>
            <person name="Saier M.H. Jr."/>
            <person name="Klaenhammer T."/>
            <person name="Richardson P."/>
            <person name="Kozyavkin S."/>
            <person name="Weimer B.C."/>
            <person name="Mills D.A."/>
        </authorList>
    </citation>
    <scope>NUCLEOTIDE SEQUENCE [LARGE SCALE GENOMIC DNA]</scope>
    <source>
        <strain>ATCC BAA-365 / Lb-18</strain>
    </source>
</reference>
<dbReference type="EC" id="6.1.1.4" evidence="1"/>
<dbReference type="EMBL" id="CP000412">
    <property type="protein sequence ID" value="ABJ58955.1"/>
    <property type="molecule type" value="Genomic_DNA"/>
</dbReference>
<dbReference type="RefSeq" id="WP_011678469.1">
    <property type="nucleotide sequence ID" value="NC_008529.1"/>
</dbReference>
<dbReference type="SMR" id="Q049B7"/>
<dbReference type="KEGG" id="lbu:LBUL_1451"/>
<dbReference type="HOGENOM" id="CLU_004427_0_0_9"/>
<dbReference type="BioCyc" id="LDEL321956:LBUL_RS06850-MONOMER"/>
<dbReference type="GO" id="GO:0005829">
    <property type="term" value="C:cytosol"/>
    <property type="evidence" value="ECO:0007669"/>
    <property type="project" value="TreeGrafter"/>
</dbReference>
<dbReference type="GO" id="GO:0002161">
    <property type="term" value="F:aminoacyl-tRNA deacylase activity"/>
    <property type="evidence" value="ECO:0007669"/>
    <property type="project" value="InterPro"/>
</dbReference>
<dbReference type="GO" id="GO:0005524">
    <property type="term" value="F:ATP binding"/>
    <property type="evidence" value="ECO:0007669"/>
    <property type="project" value="UniProtKB-UniRule"/>
</dbReference>
<dbReference type="GO" id="GO:0004823">
    <property type="term" value="F:leucine-tRNA ligase activity"/>
    <property type="evidence" value="ECO:0007669"/>
    <property type="project" value="UniProtKB-UniRule"/>
</dbReference>
<dbReference type="GO" id="GO:0006429">
    <property type="term" value="P:leucyl-tRNA aminoacylation"/>
    <property type="evidence" value="ECO:0007669"/>
    <property type="project" value="UniProtKB-UniRule"/>
</dbReference>
<dbReference type="CDD" id="cd07958">
    <property type="entry name" value="Anticodon_Ia_Leu_BEm"/>
    <property type="match status" value="1"/>
</dbReference>
<dbReference type="CDD" id="cd00812">
    <property type="entry name" value="LeuRS_core"/>
    <property type="match status" value="1"/>
</dbReference>
<dbReference type="FunFam" id="1.10.730.10:FF:000012">
    <property type="entry name" value="Leucine--tRNA ligase"/>
    <property type="match status" value="1"/>
</dbReference>
<dbReference type="FunFam" id="3.10.20.590:FF:000001">
    <property type="entry name" value="Leucine--tRNA ligase"/>
    <property type="match status" value="1"/>
</dbReference>
<dbReference type="FunFam" id="3.40.50.620:FF:000056">
    <property type="entry name" value="Leucine--tRNA ligase"/>
    <property type="match status" value="1"/>
</dbReference>
<dbReference type="FunFam" id="3.40.50.620:FF:000077">
    <property type="entry name" value="Leucine--tRNA ligase"/>
    <property type="match status" value="1"/>
</dbReference>
<dbReference type="FunFam" id="1.10.730.10:FF:000011">
    <property type="entry name" value="Leucine--tRNA ligase chloroplastic/mitochondrial"/>
    <property type="match status" value="1"/>
</dbReference>
<dbReference type="Gene3D" id="3.10.20.590">
    <property type="match status" value="1"/>
</dbReference>
<dbReference type="Gene3D" id="3.40.50.620">
    <property type="entry name" value="HUPs"/>
    <property type="match status" value="2"/>
</dbReference>
<dbReference type="Gene3D" id="1.10.730.10">
    <property type="entry name" value="Isoleucyl-tRNA Synthetase, Domain 1"/>
    <property type="match status" value="1"/>
</dbReference>
<dbReference type="HAMAP" id="MF_00049_B">
    <property type="entry name" value="Leu_tRNA_synth_B"/>
    <property type="match status" value="1"/>
</dbReference>
<dbReference type="InterPro" id="IPR001412">
    <property type="entry name" value="aa-tRNA-synth_I_CS"/>
</dbReference>
<dbReference type="InterPro" id="IPR002300">
    <property type="entry name" value="aa-tRNA-synth_Ia"/>
</dbReference>
<dbReference type="InterPro" id="IPR002302">
    <property type="entry name" value="Leu-tRNA-ligase"/>
</dbReference>
<dbReference type="InterPro" id="IPR025709">
    <property type="entry name" value="Leu_tRNA-synth_edit"/>
</dbReference>
<dbReference type="InterPro" id="IPR013155">
    <property type="entry name" value="M/V/L/I-tRNA-synth_anticd-bd"/>
</dbReference>
<dbReference type="InterPro" id="IPR015413">
    <property type="entry name" value="Methionyl/Leucyl_tRNA_Synth"/>
</dbReference>
<dbReference type="InterPro" id="IPR014729">
    <property type="entry name" value="Rossmann-like_a/b/a_fold"/>
</dbReference>
<dbReference type="InterPro" id="IPR009080">
    <property type="entry name" value="tRNAsynth_Ia_anticodon-bd"/>
</dbReference>
<dbReference type="InterPro" id="IPR009008">
    <property type="entry name" value="Val/Leu/Ile-tRNA-synth_edit"/>
</dbReference>
<dbReference type="NCBIfam" id="TIGR00396">
    <property type="entry name" value="leuS_bact"/>
    <property type="match status" value="1"/>
</dbReference>
<dbReference type="PANTHER" id="PTHR43740:SF2">
    <property type="entry name" value="LEUCINE--TRNA LIGASE, MITOCHONDRIAL"/>
    <property type="match status" value="1"/>
</dbReference>
<dbReference type="PANTHER" id="PTHR43740">
    <property type="entry name" value="LEUCYL-TRNA SYNTHETASE"/>
    <property type="match status" value="1"/>
</dbReference>
<dbReference type="Pfam" id="PF08264">
    <property type="entry name" value="Anticodon_1"/>
    <property type="match status" value="1"/>
</dbReference>
<dbReference type="Pfam" id="PF00133">
    <property type="entry name" value="tRNA-synt_1"/>
    <property type="match status" value="1"/>
</dbReference>
<dbReference type="Pfam" id="PF13603">
    <property type="entry name" value="tRNA-synt_1_2"/>
    <property type="match status" value="1"/>
</dbReference>
<dbReference type="Pfam" id="PF09334">
    <property type="entry name" value="tRNA-synt_1g"/>
    <property type="match status" value="1"/>
</dbReference>
<dbReference type="PRINTS" id="PR00985">
    <property type="entry name" value="TRNASYNTHLEU"/>
</dbReference>
<dbReference type="SUPFAM" id="SSF47323">
    <property type="entry name" value="Anticodon-binding domain of a subclass of class I aminoacyl-tRNA synthetases"/>
    <property type="match status" value="1"/>
</dbReference>
<dbReference type="SUPFAM" id="SSF52374">
    <property type="entry name" value="Nucleotidylyl transferase"/>
    <property type="match status" value="1"/>
</dbReference>
<dbReference type="SUPFAM" id="SSF50677">
    <property type="entry name" value="ValRS/IleRS/LeuRS editing domain"/>
    <property type="match status" value="1"/>
</dbReference>
<dbReference type="PROSITE" id="PS00178">
    <property type="entry name" value="AA_TRNA_LIGASE_I"/>
    <property type="match status" value="1"/>
</dbReference>
<accession>Q049B7</accession>